<protein>
    <recommendedName>
        <fullName evidence="1">7-cyano-7-deazaguanine synthase</fullName>
        <ecNumber evidence="1">6.3.4.20</ecNumber>
    </recommendedName>
    <alternativeName>
        <fullName evidence="1">7-cyano-7-carbaguanine synthase</fullName>
    </alternativeName>
    <alternativeName>
        <fullName evidence="1">PreQ(0) synthase</fullName>
    </alternativeName>
    <alternativeName>
        <fullName evidence="1">Queuosine biosynthesis protein QueC</fullName>
    </alternativeName>
</protein>
<proteinExistence type="inferred from homology"/>
<comment type="function">
    <text evidence="1">Catalyzes the ATP-dependent conversion of 7-carboxy-7-deazaguanine (CDG) to 7-cyano-7-deazaguanine (preQ(0)).</text>
</comment>
<comment type="catalytic activity">
    <reaction evidence="1">
        <text>7-carboxy-7-deazaguanine + NH4(+) + ATP = 7-cyano-7-deazaguanine + ADP + phosphate + H2O + H(+)</text>
        <dbReference type="Rhea" id="RHEA:27982"/>
        <dbReference type="ChEBI" id="CHEBI:15377"/>
        <dbReference type="ChEBI" id="CHEBI:15378"/>
        <dbReference type="ChEBI" id="CHEBI:28938"/>
        <dbReference type="ChEBI" id="CHEBI:30616"/>
        <dbReference type="ChEBI" id="CHEBI:43474"/>
        <dbReference type="ChEBI" id="CHEBI:45075"/>
        <dbReference type="ChEBI" id="CHEBI:61036"/>
        <dbReference type="ChEBI" id="CHEBI:456216"/>
        <dbReference type="EC" id="6.3.4.20"/>
    </reaction>
</comment>
<comment type="cofactor">
    <cofactor evidence="1">
        <name>Zn(2+)</name>
        <dbReference type="ChEBI" id="CHEBI:29105"/>
    </cofactor>
    <text evidence="1">Binds 1 zinc ion per subunit.</text>
</comment>
<comment type="pathway">
    <text evidence="1">Purine metabolism; 7-cyano-7-deazaguanine biosynthesis.</text>
</comment>
<comment type="subunit">
    <text evidence="1">Homodimer.</text>
</comment>
<comment type="similarity">
    <text evidence="1">Belongs to the QueC family.</text>
</comment>
<accession>A5N597</accession>
<feature type="chain" id="PRO_0000336908" description="7-cyano-7-deazaguanine synthase">
    <location>
        <begin position="1"/>
        <end position="226"/>
    </location>
</feature>
<feature type="binding site" evidence="1">
    <location>
        <begin position="8"/>
        <end position="18"/>
    </location>
    <ligand>
        <name>ATP</name>
        <dbReference type="ChEBI" id="CHEBI:30616"/>
    </ligand>
</feature>
<feature type="binding site" evidence="1">
    <location>
        <position position="190"/>
    </location>
    <ligand>
        <name>Zn(2+)</name>
        <dbReference type="ChEBI" id="CHEBI:29105"/>
    </ligand>
</feature>
<feature type="binding site" evidence="1">
    <location>
        <position position="198"/>
    </location>
    <ligand>
        <name>Zn(2+)</name>
        <dbReference type="ChEBI" id="CHEBI:29105"/>
    </ligand>
</feature>
<feature type="binding site" evidence="1">
    <location>
        <position position="201"/>
    </location>
    <ligand>
        <name>Zn(2+)</name>
        <dbReference type="ChEBI" id="CHEBI:29105"/>
    </ligand>
</feature>
<feature type="binding site" evidence="1">
    <location>
        <position position="204"/>
    </location>
    <ligand>
        <name>Zn(2+)</name>
        <dbReference type="ChEBI" id="CHEBI:29105"/>
    </ligand>
</feature>
<sequence length="226" mass="25268">MKKAVVLLSGGLDSTTVLYLAKSQGYEVYAMSFDYGQRHKKEIQCARDVASGTGAADFVLVTTNMNAWGGSALTDNSIKVPEFNEESEKIPVTYVPARNMIFLSYAASYAETIGAYDIFIGVSEVDYSGYVDCRHEFIDSMEKTINLGTVCAVEHKKYIKIHAPFLYKTKSEEIKIGMDLGVKYEKTWTCYNGEEFACGICDSCRLRLEAFKEAGYKDPIKYKGEK</sequence>
<keyword id="KW-0067">ATP-binding</keyword>
<keyword id="KW-0436">Ligase</keyword>
<keyword id="KW-0479">Metal-binding</keyword>
<keyword id="KW-0547">Nucleotide-binding</keyword>
<keyword id="KW-0671">Queuosine biosynthesis</keyword>
<keyword id="KW-1185">Reference proteome</keyword>
<keyword id="KW-0862">Zinc</keyword>
<name>QUEC_CLOK5</name>
<evidence type="ECO:0000255" key="1">
    <source>
        <dbReference type="HAMAP-Rule" id="MF_01633"/>
    </source>
</evidence>
<reference key="1">
    <citation type="journal article" date="2008" name="Proc. Natl. Acad. Sci. U.S.A.">
        <title>The genome of Clostridium kluyveri, a strict anaerobe with unique metabolic features.</title>
        <authorList>
            <person name="Seedorf H."/>
            <person name="Fricke W.F."/>
            <person name="Veith B."/>
            <person name="Brueggemann H."/>
            <person name="Liesegang H."/>
            <person name="Strittmatter A."/>
            <person name="Miethke M."/>
            <person name="Buckel W."/>
            <person name="Hinderberger J."/>
            <person name="Li F."/>
            <person name="Hagemeier C."/>
            <person name="Thauer R.K."/>
            <person name="Gottschalk G."/>
        </authorList>
    </citation>
    <scope>NUCLEOTIDE SEQUENCE [LARGE SCALE GENOMIC DNA]</scope>
    <source>
        <strain>ATCC 8527 / DSM 555 / NBRC 12016 / NCIMB 10680 / K1</strain>
    </source>
</reference>
<organism>
    <name type="scientific">Clostridium kluyveri (strain ATCC 8527 / DSM 555 / NBRC 12016 / NCIMB 10680 / K1)</name>
    <dbReference type="NCBI Taxonomy" id="431943"/>
    <lineage>
        <taxon>Bacteria</taxon>
        <taxon>Bacillati</taxon>
        <taxon>Bacillota</taxon>
        <taxon>Clostridia</taxon>
        <taxon>Eubacteriales</taxon>
        <taxon>Clostridiaceae</taxon>
        <taxon>Clostridium</taxon>
    </lineage>
</organism>
<gene>
    <name evidence="1" type="primary">queC</name>
    <name type="ordered locus">CKL_0424</name>
</gene>
<dbReference type="EC" id="6.3.4.20" evidence="1"/>
<dbReference type="EMBL" id="CP000673">
    <property type="protein sequence ID" value="EDK32478.1"/>
    <property type="molecule type" value="Genomic_DNA"/>
</dbReference>
<dbReference type="RefSeq" id="WP_011988993.1">
    <property type="nucleotide sequence ID" value="NC_009706.1"/>
</dbReference>
<dbReference type="SMR" id="A5N597"/>
<dbReference type="STRING" id="431943.CKL_0424"/>
<dbReference type="KEGG" id="ckl:CKL_0424"/>
<dbReference type="eggNOG" id="COG0603">
    <property type="taxonomic scope" value="Bacteria"/>
</dbReference>
<dbReference type="HOGENOM" id="CLU_081854_1_0_9"/>
<dbReference type="UniPathway" id="UPA00391"/>
<dbReference type="Proteomes" id="UP000002411">
    <property type="component" value="Chromosome"/>
</dbReference>
<dbReference type="GO" id="GO:0005524">
    <property type="term" value="F:ATP binding"/>
    <property type="evidence" value="ECO:0007669"/>
    <property type="project" value="UniProtKB-UniRule"/>
</dbReference>
<dbReference type="GO" id="GO:0016879">
    <property type="term" value="F:ligase activity, forming carbon-nitrogen bonds"/>
    <property type="evidence" value="ECO:0007669"/>
    <property type="project" value="UniProtKB-UniRule"/>
</dbReference>
<dbReference type="GO" id="GO:0008270">
    <property type="term" value="F:zinc ion binding"/>
    <property type="evidence" value="ECO:0007669"/>
    <property type="project" value="UniProtKB-UniRule"/>
</dbReference>
<dbReference type="GO" id="GO:0008616">
    <property type="term" value="P:queuosine biosynthetic process"/>
    <property type="evidence" value="ECO:0007669"/>
    <property type="project" value="UniProtKB-UniRule"/>
</dbReference>
<dbReference type="CDD" id="cd01995">
    <property type="entry name" value="QueC-like"/>
    <property type="match status" value="1"/>
</dbReference>
<dbReference type="Gene3D" id="3.40.50.620">
    <property type="entry name" value="HUPs"/>
    <property type="match status" value="1"/>
</dbReference>
<dbReference type="HAMAP" id="MF_01633">
    <property type="entry name" value="QueC"/>
    <property type="match status" value="1"/>
</dbReference>
<dbReference type="InterPro" id="IPR018317">
    <property type="entry name" value="QueC"/>
</dbReference>
<dbReference type="InterPro" id="IPR014729">
    <property type="entry name" value="Rossmann-like_a/b/a_fold"/>
</dbReference>
<dbReference type="NCBIfam" id="TIGR00364">
    <property type="entry name" value="7-cyano-7-deazaguanine synthase QueC"/>
    <property type="match status" value="1"/>
</dbReference>
<dbReference type="PANTHER" id="PTHR42914">
    <property type="entry name" value="7-CYANO-7-DEAZAGUANINE SYNTHASE"/>
    <property type="match status" value="1"/>
</dbReference>
<dbReference type="PANTHER" id="PTHR42914:SF1">
    <property type="entry name" value="7-CYANO-7-DEAZAGUANINE SYNTHASE"/>
    <property type="match status" value="1"/>
</dbReference>
<dbReference type="Pfam" id="PF06508">
    <property type="entry name" value="QueC"/>
    <property type="match status" value="1"/>
</dbReference>
<dbReference type="PIRSF" id="PIRSF006293">
    <property type="entry name" value="ExsB"/>
    <property type="match status" value="1"/>
</dbReference>
<dbReference type="SUPFAM" id="SSF52402">
    <property type="entry name" value="Adenine nucleotide alpha hydrolases-like"/>
    <property type="match status" value="1"/>
</dbReference>